<reference key="1">
    <citation type="journal article" date="1997" name="Phytochemistry">
        <title>Jasmonic acid inducible aspartic proteinase inhibitors from potato.</title>
        <authorList>
            <person name="Kreft S."/>
            <person name="Ravnikar M."/>
            <person name="Mesko P."/>
            <person name="Pungercar J."/>
            <person name="Umek A."/>
            <person name="Kregar I."/>
            <person name="Strukelj B."/>
        </authorList>
    </citation>
    <scope>NUCLEOTIDE SEQUENCE [MRNA]</scope>
    <source>
        <strain>cv. Ulster Sceptre</strain>
        <tissue>Tuber</tissue>
    </source>
</reference>
<reference key="2">
    <citation type="journal article" date="1995" name="Adv. Exp. Med. Biol.">
        <title>Molecular cloning and immunocytochemical localization of jasmonic acid inducible cathepsin D inhibitors from potato.</title>
        <authorList>
            <person name="Strukelj B."/>
            <person name="Ravnikar M."/>
            <person name="Mesko P."/>
            <person name="Poljsak-Prijatelj M."/>
            <person name="Pungercar J."/>
            <person name="Kopitar G."/>
            <person name="Kregar I."/>
            <person name="Turk V."/>
        </authorList>
    </citation>
    <scope>NUCLEOTIDE SEQUENCE [MRNA] OF 5-220</scope>
    <source>
        <strain>cv. Ulster Sceptre</strain>
        <tissue>Tuber</tissue>
    </source>
</reference>
<proteinExistence type="evidence at transcript level"/>
<evidence type="ECO:0000250" key="1"/>
<evidence type="ECO:0000255" key="2"/>
<evidence type="ECO:0000305" key="3"/>
<keyword id="KW-0062">Aspartic protease inhibitor</keyword>
<keyword id="KW-1015">Disulfide bond</keyword>
<keyword id="KW-0325">Glycoprotein</keyword>
<keyword id="KW-0646">Protease inhibitor</keyword>
<keyword id="KW-1185">Reference proteome</keyword>
<keyword id="KW-0722">Serine protease inhibitor</keyword>
<keyword id="KW-0732">Signal</keyword>
<keyword id="KW-0926">Vacuole</keyword>
<protein>
    <recommendedName>
        <fullName>Aspartic protease inhibitor 4</fullName>
    </recommendedName>
    <alternativeName>
        <fullName>API-13</fullName>
        <shortName>PI13</shortName>
    </alternativeName>
</protein>
<accession>Q43645</accession>
<dbReference type="EMBL" id="X62095">
    <property type="protein sequence ID" value="CAA44005.1"/>
    <property type="molecule type" value="mRNA"/>
</dbReference>
<dbReference type="SMR" id="Q43645"/>
<dbReference type="MEROPS" id="I03.002"/>
<dbReference type="InParanoid" id="Q43645"/>
<dbReference type="Proteomes" id="UP000011115">
    <property type="component" value="Unassembled WGS sequence"/>
</dbReference>
<dbReference type="ExpressionAtlas" id="Q43645">
    <property type="expression patterns" value="baseline and differential"/>
</dbReference>
<dbReference type="GO" id="GO:0005773">
    <property type="term" value="C:vacuole"/>
    <property type="evidence" value="ECO:0007669"/>
    <property type="project" value="UniProtKB-SubCell"/>
</dbReference>
<dbReference type="GO" id="GO:0019828">
    <property type="term" value="F:aspartic-type endopeptidase inhibitor activity"/>
    <property type="evidence" value="ECO:0007669"/>
    <property type="project" value="UniProtKB-KW"/>
</dbReference>
<dbReference type="GO" id="GO:0004867">
    <property type="term" value="F:serine-type endopeptidase inhibitor activity"/>
    <property type="evidence" value="ECO:0007669"/>
    <property type="project" value="UniProtKB-KW"/>
</dbReference>
<dbReference type="CDD" id="cd23372">
    <property type="entry name" value="beta-trefoil_STI_CPI-like"/>
    <property type="match status" value="1"/>
</dbReference>
<dbReference type="Gene3D" id="2.80.10.50">
    <property type="match status" value="1"/>
</dbReference>
<dbReference type="InterPro" id="IPR011065">
    <property type="entry name" value="Kunitz_inhibitor_STI-like_sf"/>
</dbReference>
<dbReference type="InterPro" id="IPR002160">
    <property type="entry name" value="Prot_inh_Kunz-lg"/>
</dbReference>
<dbReference type="PANTHER" id="PTHR33107">
    <property type="entry name" value="KUNITZ TRYPSIN INHIBITOR 2"/>
    <property type="match status" value="1"/>
</dbReference>
<dbReference type="PANTHER" id="PTHR33107:SF38">
    <property type="entry name" value="SERINE PROTEASE INHIBITOR 5"/>
    <property type="match status" value="1"/>
</dbReference>
<dbReference type="Pfam" id="PF00197">
    <property type="entry name" value="Kunitz_legume"/>
    <property type="match status" value="1"/>
</dbReference>
<dbReference type="PRINTS" id="PR00291">
    <property type="entry name" value="KUNITZINHBTR"/>
</dbReference>
<dbReference type="SMART" id="SM00452">
    <property type="entry name" value="STI"/>
    <property type="match status" value="1"/>
</dbReference>
<dbReference type="SUPFAM" id="SSF50386">
    <property type="entry name" value="STI-like"/>
    <property type="match status" value="1"/>
</dbReference>
<dbReference type="PROSITE" id="PS00283">
    <property type="entry name" value="SOYBEAN_KUNITZ"/>
    <property type="match status" value="1"/>
</dbReference>
<feature type="signal peptide" evidence="1">
    <location>
        <begin position="1"/>
        <end position="23"/>
    </location>
</feature>
<feature type="propeptide" id="PRO_0000016914" evidence="1">
    <location>
        <begin position="24"/>
        <end position="32"/>
    </location>
</feature>
<feature type="chain" id="PRO_0000016915" description="Aspartic protease inhibitor 4">
    <location>
        <begin position="33"/>
        <end position="220"/>
    </location>
</feature>
<feature type="short sequence motif" description="Vacuolar targeting signal" evidence="1">
    <location>
        <begin position="26"/>
        <end position="31"/>
    </location>
</feature>
<feature type="site" description="Reactive bond for trypsin" evidence="1">
    <location>
        <begin position="99"/>
        <end position="100"/>
    </location>
</feature>
<feature type="site" description="Reactive bond for chymotrypsin" evidence="1">
    <location>
        <begin position="143"/>
        <end position="144"/>
    </location>
</feature>
<feature type="glycosylation site" description="N-linked (GlcNAc...) asparagine" evidence="2">
    <location>
        <position position="51"/>
    </location>
</feature>
<feature type="disulfide bond" evidence="1">
    <location>
        <begin position="80"/>
        <end position="125"/>
    </location>
</feature>
<feature type="disulfide bond" evidence="1">
    <location>
        <begin position="174"/>
        <end position="185"/>
    </location>
</feature>
<name>API4_SOLTU</name>
<organism>
    <name type="scientific">Solanum tuberosum</name>
    <name type="common">Potato</name>
    <dbReference type="NCBI Taxonomy" id="4113"/>
    <lineage>
        <taxon>Eukaryota</taxon>
        <taxon>Viridiplantae</taxon>
        <taxon>Streptophyta</taxon>
        <taxon>Embryophyta</taxon>
        <taxon>Tracheophyta</taxon>
        <taxon>Spermatophyta</taxon>
        <taxon>Magnoliopsida</taxon>
        <taxon>eudicotyledons</taxon>
        <taxon>Gunneridae</taxon>
        <taxon>Pentapetalae</taxon>
        <taxon>asterids</taxon>
        <taxon>lamiids</taxon>
        <taxon>Solanales</taxon>
        <taxon>Solanaceae</taxon>
        <taxon>Solanoideae</taxon>
        <taxon>Solaneae</taxon>
        <taxon>Solanum</taxon>
    </lineage>
</organism>
<comment type="function">
    <text>Inhibits tightly cathepsin D (aspartic protease) and weakly trypsin (serine protease). May protect the plant by inhibiting proteases of invading organisms.</text>
</comment>
<comment type="subcellular location">
    <subcellularLocation>
        <location evidence="1">Vacuole</location>
    </subcellularLocation>
</comment>
<comment type="tissue specificity">
    <text>Tubers.</text>
</comment>
<comment type="induction">
    <text>By jasmonate.</text>
</comment>
<comment type="similarity">
    <text evidence="3">Belongs to the protease inhibitor I3 (leguminous Kunitz-type inhibitor) family.</text>
</comment>
<sequence length="220" mass="24375">MMKCLFLLCLCLLPILVFSSTFTSQNPINLPSESPVPKPVLDTNGKELNPNSSYRIISIGRGALGGDVYLGKSPNSDAPCPDGVFRYNSDVGPSGTPVRFIPLSTNIFEDQLLNIQFNIPTVKLCVSYRNWKVGNLNAHLWTMLLETGGTIGQADSSYFKIVKSSKFGYNLLYCPITRHFLCPFCRDDNFCAKVGVDIQNGKRRLALVSENPLDVLFQEV</sequence>